<reference key="1">
    <citation type="journal article" date="2004" name="J. Biol. Chem.">
        <title>A Kazal-like extracellular serine protease inhibitor from Phytophthora infestans targets the tomato pathogenesis-related protease P69B.</title>
        <authorList>
            <person name="Tian M."/>
            <person name="Huitema E."/>
            <person name="Da Cunha L."/>
            <person name="Torto-Alalibo T."/>
            <person name="Kamoun S."/>
        </authorList>
    </citation>
    <scope>NUCLEOTIDE SEQUENCE [MRNA]</scope>
    <scope>FUNCTION</scope>
    <scope>SUBCELLULAR LOCATION</scope>
    <scope>INTERACTION WITH HOST P69B</scope>
    <scope>INDUCTION</scope>
    <source>
        <strain>90128</strain>
    </source>
</reference>
<gene>
    <name evidence="5" type="primary">EPI1</name>
</gene>
<feature type="signal peptide" evidence="1">
    <location>
        <begin position="1"/>
        <end position="16"/>
    </location>
</feature>
<feature type="chain" id="PRO_5004278549" description="Extracellular protease inhibitor 1">
    <location>
        <begin position="17"/>
        <end position="149"/>
    </location>
</feature>
<feature type="domain" description="Kazal-like 1" evidence="3">
    <location>
        <begin position="29"/>
        <end position="86"/>
    </location>
</feature>
<feature type="domain" description="Kazal-like 2" evidence="3">
    <location>
        <begin position="88"/>
        <end position="141"/>
    </location>
</feature>
<feature type="site" description="Reactive bond" evidence="3">
    <location>
        <begin position="41"/>
        <end position="42"/>
    </location>
</feature>
<feature type="site" description="Reactive bond" evidence="3">
    <location>
        <begin position="100"/>
        <end position="101"/>
    </location>
</feature>
<feature type="glycosylation site" description="N-linked (GlcNAc...) asparagine" evidence="2">
    <location>
        <position position="67"/>
    </location>
</feature>
<feature type="disulfide bond" evidence="3">
    <location>
        <begin position="35"/>
        <end position="65"/>
    </location>
</feature>
<feature type="disulfide bond" evidence="3">
    <location>
        <begin position="39"/>
        <end position="58"/>
    </location>
</feature>
<feature type="disulfide bond" evidence="3">
    <location>
        <begin position="94"/>
        <end position="124"/>
    </location>
</feature>
<feature type="disulfide bond" evidence="3">
    <location>
        <begin position="98"/>
        <end position="117"/>
    </location>
</feature>
<feature type="disulfide bond" evidence="3">
    <location>
        <begin position="106"/>
        <end position="139"/>
    </location>
</feature>
<organism>
    <name type="scientific">Phytophthora infestans</name>
    <name type="common">Potato late blight agent</name>
    <name type="synonym">Botrytis infestans</name>
    <dbReference type="NCBI Taxonomy" id="4787"/>
    <lineage>
        <taxon>Eukaryota</taxon>
        <taxon>Sar</taxon>
        <taxon>Stramenopiles</taxon>
        <taxon>Oomycota</taxon>
        <taxon>Peronosporales</taxon>
        <taxon>Peronosporaceae</taxon>
        <taxon>Phytophthora</taxon>
    </lineage>
</organism>
<accession>Q6PQH2</accession>
<proteinExistence type="evidence at protein level"/>
<comment type="function">
    <text evidence="4">Secreted effector that interacts with and inhibits the pathogenesis-related P69B subtilisin-like serine protease of host tomato (PubMed:15096512). Inhibition of host proteases by a pathogen extracellular protease inhibitor forms a specific type of defense-counterdefense mechanism between plants and microbial pathogens (PubMed:15096512).</text>
</comment>
<comment type="subunit">
    <text evidence="4">Interacts with host subtilisin-like protease P69B.</text>
</comment>
<comment type="subcellular location">
    <subcellularLocation>
        <location evidence="6">Secreted</location>
    </subcellularLocation>
    <text evidence="4">Localizes to host apoplast where it targets defense proteases for inhibition.</text>
</comment>
<comment type="induction">
    <text evidence="4">Expressed during host infection with the highest mRNA levels 3 days post-inoculation (PubMed:15096512). EPI1 and its host target P69B are concurrently expressed during infection of tomato by P.infestans (PubMed:15096512).</text>
</comment>
<name>EPI1_PHYIN</name>
<protein>
    <recommendedName>
        <fullName evidence="5">Extracellular protease inhibitor 1</fullName>
    </recommendedName>
    <alternativeName>
        <fullName evidence="5">Secreted effector EPI1</fullName>
    </alternativeName>
</protein>
<dbReference type="EMBL" id="AY586273">
    <property type="protein sequence ID" value="AAT00500.1"/>
    <property type="molecule type" value="mRNA"/>
</dbReference>
<dbReference type="SMR" id="Q6PQH2"/>
<dbReference type="MEROPS" id="I01.040"/>
<dbReference type="GlyCosmos" id="Q6PQH2">
    <property type="glycosylation" value="1 site, No reported glycans"/>
</dbReference>
<dbReference type="VEuPathDB" id="FungiDB:PITG_22681"/>
<dbReference type="OMA" id="RAKCHNE"/>
<dbReference type="PHI-base" id="PHI:4251"/>
<dbReference type="GO" id="GO:0005576">
    <property type="term" value="C:extracellular region"/>
    <property type="evidence" value="ECO:0007669"/>
    <property type="project" value="UniProtKB-SubCell"/>
</dbReference>
<dbReference type="GO" id="GO:0004867">
    <property type="term" value="F:serine-type endopeptidase inhibitor activity"/>
    <property type="evidence" value="ECO:0007669"/>
    <property type="project" value="UniProtKB-KW"/>
</dbReference>
<dbReference type="CDD" id="cd00104">
    <property type="entry name" value="KAZAL_FS"/>
    <property type="match status" value="2"/>
</dbReference>
<dbReference type="Gene3D" id="3.30.60.30">
    <property type="match status" value="2"/>
</dbReference>
<dbReference type="InterPro" id="IPR002350">
    <property type="entry name" value="Kazal_dom"/>
</dbReference>
<dbReference type="InterPro" id="IPR036058">
    <property type="entry name" value="Kazal_dom_sf"/>
</dbReference>
<dbReference type="InterPro" id="IPR050653">
    <property type="entry name" value="Prot_Inhib_GrowthFact_Antg"/>
</dbReference>
<dbReference type="PANTHER" id="PTHR10913:SF45">
    <property type="entry name" value="FOLLISTATIN, ISOFORM A-RELATED"/>
    <property type="match status" value="1"/>
</dbReference>
<dbReference type="PANTHER" id="PTHR10913">
    <property type="entry name" value="FOLLISTATIN-RELATED"/>
    <property type="match status" value="1"/>
</dbReference>
<dbReference type="Pfam" id="PF07648">
    <property type="entry name" value="Kazal_2"/>
    <property type="match status" value="2"/>
</dbReference>
<dbReference type="SMART" id="SM00280">
    <property type="entry name" value="KAZAL"/>
    <property type="match status" value="2"/>
</dbReference>
<dbReference type="SUPFAM" id="SSF100895">
    <property type="entry name" value="Kazal-type serine protease inhibitors"/>
    <property type="match status" value="2"/>
</dbReference>
<dbReference type="PROSITE" id="PS51465">
    <property type="entry name" value="KAZAL_2"/>
    <property type="match status" value="2"/>
</dbReference>
<keyword id="KW-1015">Disulfide bond</keyword>
<keyword id="KW-0325">Glycoprotein</keyword>
<keyword id="KW-0646">Protease inhibitor</keyword>
<keyword id="KW-0677">Repeat</keyword>
<keyword id="KW-0964">Secreted</keyword>
<keyword id="KW-0722">Serine protease inhibitor</keyword>
<keyword id="KW-0732">Signal</keyword>
<keyword id="KW-0843">Virulence</keyword>
<evidence type="ECO:0000255" key="1"/>
<evidence type="ECO:0000255" key="2">
    <source>
        <dbReference type="PROSITE-ProRule" id="PRU00498"/>
    </source>
</evidence>
<evidence type="ECO:0000255" key="3">
    <source>
        <dbReference type="PROSITE-ProRule" id="PRU00798"/>
    </source>
</evidence>
<evidence type="ECO:0000269" key="4">
    <source>
    </source>
</evidence>
<evidence type="ECO:0000303" key="5">
    <source>
    </source>
</evidence>
<evidence type="ECO:0000305" key="6">
    <source>
    </source>
</evidence>
<sequence length="149" mass="16097">MKSALLFTLVVAAVHAQSPQVISPAPRRESNEIDCPEYCLDVYDPVGDGEGNTYSNECYMKRAKCHNETTPPAWKDLVLITGSSTGEQPPSKKCSTVCPDVELPVCGSNRVRYGNPCELRIAACEHPELNIVEDSGKACVGSKVTPQEG</sequence>